<gene>
    <name evidence="1" type="primary">rpoC</name>
    <name type="ordered locus">CPn_0082</name>
    <name type="ordered locus">CP_0693</name>
    <name type="ordered locus">CpB0082</name>
</gene>
<keyword id="KW-0240">DNA-directed RNA polymerase</keyword>
<keyword id="KW-0460">Magnesium</keyword>
<keyword id="KW-0479">Metal-binding</keyword>
<keyword id="KW-0548">Nucleotidyltransferase</keyword>
<keyword id="KW-0804">Transcription</keyword>
<keyword id="KW-0808">Transferase</keyword>
<keyword id="KW-0862">Zinc</keyword>
<comment type="function">
    <text evidence="1">DNA-dependent RNA polymerase catalyzes the transcription of DNA into RNA using the four ribonucleoside triphosphates as substrates.</text>
</comment>
<comment type="catalytic activity">
    <reaction evidence="1">
        <text>RNA(n) + a ribonucleoside 5'-triphosphate = RNA(n+1) + diphosphate</text>
        <dbReference type="Rhea" id="RHEA:21248"/>
        <dbReference type="Rhea" id="RHEA-COMP:14527"/>
        <dbReference type="Rhea" id="RHEA-COMP:17342"/>
        <dbReference type="ChEBI" id="CHEBI:33019"/>
        <dbReference type="ChEBI" id="CHEBI:61557"/>
        <dbReference type="ChEBI" id="CHEBI:140395"/>
        <dbReference type="EC" id="2.7.7.6"/>
    </reaction>
</comment>
<comment type="cofactor">
    <cofactor evidence="1">
        <name>Mg(2+)</name>
        <dbReference type="ChEBI" id="CHEBI:18420"/>
    </cofactor>
    <text evidence="1">Binds 1 Mg(2+) ion per subunit.</text>
</comment>
<comment type="cofactor">
    <cofactor evidence="1">
        <name>Zn(2+)</name>
        <dbReference type="ChEBI" id="CHEBI:29105"/>
    </cofactor>
    <text evidence="1">Binds 2 Zn(2+) ions per subunit.</text>
</comment>
<comment type="subunit">
    <text evidence="1">The RNAP catalytic core consists of 2 alpha, 1 beta, 1 beta' and 1 omega subunit. When a sigma factor is associated with the core the holoenzyme is formed, which can initiate transcription.</text>
</comment>
<comment type="similarity">
    <text evidence="1">Belongs to the RNA polymerase beta' chain family.</text>
</comment>
<comment type="sequence caution" evidence="2">
    <conflict type="erroneous initiation">
        <sequence resource="EMBL-CDS" id="AAF38501"/>
    </conflict>
    <text>Extended N-terminus.</text>
</comment>
<protein>
    <recommendedName>
        <fullName evidence="1">DNA-directed RNA polymerase subunit beta'</fullName>
        <shortName evidence="1">RNAP subunit beta'</shortName>
        <ecNumber evidence="1">2.7.7.6</ecNumber>
    </recommendedName>
    <alternativeName>
        <fullName evidence="1">RNA polymerase subunit beta'</fullName>
    </alternativeName>
    <alternativeName>
        <fullName evidence="1">Transcriptase subunit beta'</fullName>
    </alternativeName>
</protein>
<proteinExistence type="inferred from homology"/>
<accession>Q9Z999</accession>
<accession>Q9JSJ7</accession>
<accession>Q9K211</accession>
<evidence type="ECO:0000255" key="1">
    <source>
        <dbReference type="HAMAP-Rule" id="MF_01322"/>
    </source>
</evidence>
<evidence type="ECO:0000305" key="2"/>
<feature type="chain" id="PRO_0000067728" description="DNA-directed RNA polymerase subunit beta'">
    <location>
        <begin position="1"/>
        <end position="1393"/>
    </location>
</feature>
<feature type="binding site" evidence="1">
    <location>
        <position position="72"/>
    </location>
    <ligand>
        <name>Zn(2+)</name>
        <dbReference type="ChEBI" id="CHEBI:29105"/>
        <label>1</label>
    </ligand>
</feature>
<feature type="binding site" evidence="1">
    <location>
        <position position="74"/>
    </location>
    <ligand>
        <name>Zn(2+)</name>
        <dbReference type="ChEBI" id="CHEBI:29105"/>
        <label>1</label>
    </ligand>
</feature>
<feature type="binding site" evidence="1">
    <location>
        <position position="87"/>
    </location>
    <ligand>
        <name>Zn(2+)</name>
        <dbReference type="ChEBI" id="CHEBI:29105"/>
        <label>1</label>
    </ligand>
</feature>
<feature type="binding site" evidence="1">
    <location>
        <position position="90"/>
    </location>
    <ligand>
        <name>Zn(2+)</name>
        <dbReference type="ChEBI" id="CHEBI:29105"/>
        <label>1</label>
    </ligand>
</feature>
<feature type="binding site" evidence="1">
    <location>
        <position position="463"/>
    </location>
    <ligand>
        <name>Mg(2+)</name>
        <dbReference type="ChEBI" id="CHEBI:18420"/>
    </ligand>
</feature>
<feature type="binding site" evidence="1">
    <location>
        <position position="465"/>
    </location>
    <ligand>
        <name>Mg(2+)</name>
        <dbReference type="ChEBI" id="CHEBI:18420"/>
    </ligand>
</feature>
<feature type="binding site" evidence="1">
    <location>
        <position position="467"/>
    </location>
    <ligand>
        <name>Mg(2+)</name>
        <dbReference type="ChEBI" id="CHEBI:18420"/>
    </ligand>
</feature>
<feature type="binding site" evidence="1">
    <location>
        <position position="812"/>
    </location>
    <ligand>
        <name>Zn(2+)</name>
        <dbReference type="ChEBI" id="CHEBI:29105"/>
        <label>2</label>
    </ligand>
</feature>
<feature type="binding site" evidence="1">
    <location>
        <position position="887"/>
    </location>
    <ligand>
        <name>Zn(2+)</name>
        <dbReference type="ChEBI" id="CHEBI:29105"/>
        <label>2</label>
    </ligand>
</feature>
<feature type="binding site" evidence="1">
    <location>
        <position position="894"/>
    </location>
    <ligand>
        <name>Zn(2+)</name>
        <dbReference type="ChEBI" id="CHEBI:29105"/>
        <label>2</label>
    </ligand>
</feature>
<feature type="binding site" evidence="1">
    <location>
        <position position="897"/>
    </location>
    <ligand>
        <name>Zn(2+)</name>
        <dbReference type="ChEBI" id="CHEBI:29105"/>
        <label>2</label>
    </ligand>
</feature>
<feature type="sequence conflict" description="In Ref. 1; AAD18235." evidence="2" ref="1">
    <original>A</original>
    <variation>G</variation>
    <location>
        <position position="1031"/>
    </location>
</feature>
<reference key="1">
    <citation type="journal article" date="1999" name="Nat. Genet.">
        <title>Comparative genomes of Chlamydia pneumoniae and C. trachomatis.</title>
        <authorList>
            <person name="Kalman S."/>
            <person name="Mitchell W.P."/>
            <person name="Marathe R."/>
            <person name="Lammel C.J."/>
            <person name="Fan J."/>
            <person name="Hyman R.W."/>
            <person name="Olinger L."/>
            <person name="Grimwood J."/>
            <person name="Davis R.W."/>
            <person name="Stephens R.S."/>
        </authorList>
    </citation>
    <scope>NUCLEOTIDE SEQUENCE [LARGE SCALE GENOMIC DNA]</scope>
    <source>
        <strain>CWL029</strain>
    </source>
</reference>
<reference key="2">
    <citation type="journal article" date="2000" name="Nucleic Acids Res.">
        <title>Genome sequences of Chlamydia trachomatis MoPn and Chlamydia pneumoniae AR39.</title>
        <authorList>
            <person name="Read T.D."/>
            <person name="Brunham R.C."/>
            <person name="Shen C."/>
            <person name="Gill S.R."/>
            <person name="Heidelberg J.F."/>
            <person name="White O."/>
            <person name="Hickey E.K."/>
            <person name="Peterson J.D."/>
            <person name="Utterback T.R."/>
            <person name="Berry K.J."/>
            <person name="Bass S."/>
            <person name="Linher K.D."/>
            <person name="Weidman J.F."/>
            <person name="Khouri H.M."/>
            <person name="Craven B."/>
            <person name="Bowman C."/>
            <person name="Dodson R.J."/>
            <person name="Gwinn M.L."/>
            <person name="Nelson W.C."/>
            <person name="DeBoy R.T."/>
            <person name="Kolonay J.F."/>
            <person name="McClarty G."/>
            <person name="Salzberg S.L."/>
            <person name="Eisen J.A."/>
            <person name="Fraser C.M."/>
        </authorList>
    </citation>
    <scope>NUCLEOTIDE SEQUENCE [LARGE SCALE GENOMIC DNA]</scope>
    <source>
        <strain>AR39</strain>
    </source>
</reference>
<reference key="3">
    <citation type="journal article" date="2000" name="Nucleic Acids Res.">
        <title>Comparison of whole genome sequences of Chlamydia pneumoniae J138 from Japan and CWL029 from USA.</title>
        <authorList>
            <person name="Shirai M."/>
            <person name="Hirakawa H."/>
            <person name="Kimoto M."/>
            <person name="Tabuchi M."/>
            <person name="Kishi F."/>
            <person name="Ouchi K."/>
            <person name="Shiba T."/>
            <person name="Ishii K."/>
            <person name="Hattori M."/>
            <person name="Kuhara S."/>
            <person name="Nakazawa T."/>
        </authorList>
    </citation>
    <scope>NUCLEOTIDE SEQUENCE [LARGE SCALE GENOMIC DNA]</scope>
    <source>
        <strain>J138</strain>
    </source>
</reference>
<reference key="4">
    <citation type="submission" date="2002-05" db="EMBL/GenBank/DDBJ databases">
        <title>The genome sequence of Chlamydia pneumoniae TW183 and comparison with other Chlamydia strains based on whole genome sequence analysis.</title>
        <authorList>
            <person name="Geng M.M."/>
            <person name="Schuhmacher A."/>
            <person name="Muehldorfer I."/>
            <person name="Bensch K.W."/>
            <person name="Schaefer K.P."/>
            <person name="Schneider S."/>
            <person name="Pohl T."/>
            <person name="Essig A."/>
            <person name="Marre R."/>
            <person name="Melchers K."/>
        </authorList>
    </citation>
    <scope>NUCLEOTIDE SEQUENCE [LARGE SCALE GENOMIC DNA]</scope>
    <source>
        <strain>TW-183</strain>
    </source>
</reference>
<dbReference type="EC" id="2.7.7.6" evidence="1"/>
<dbReference type="EMBL" id="AE001363">
    <property type="protein sequence ID" value="AAD18235.1"/>
    <property type="molecule type" value="Genomic_DNA"/>
</dbReference>
<dbReference type="EMBL" id="AE002161">
    <property type="protein sequence ID" value="AAF38501.1"/>
    <property type="status" value="ALT_INIT"/>
    <property type="molecule type" value="Genomic_DNA"/>
</dbReference>
<dbReference type="EMBL" id="BA000008">
    <property type="protein sequence ID" value="BAA98292.1"/>
    <property type="molecule type" value="Genomic_DNA"/>
</dbReference>
<dbReference type="EMBL" id="AE009440">
    <property type="protein sequence ID" value="AAP98015.1"/>
    <property type="molecule type" value="Genomic_DNA"/>
</dbReference>
<dbReference type="PIR" id="B86501">
    <property type="entry name" value="B86501"/>
</dbReference>
<dbReference type="PIR" id="E72122">
    <property type="entry name" value="E72122"/>
</dbReference>
<dbReference type="PIR" id="E81548">
    <property type="entry name" value="E81548"/>
</dbReference>
<dbReference type="RefSeq" id="NP_224290.1">
    <property type="nucleotide sequence ID" value="NC_000922.1"/>
</dbReference>
<dbReference type="RefSeq" id="WP_010895278.1">
    <property type="nucleotide sequence ID" value="NZ_LN847257.1"/>
</dbReference>
<dbReference type="SMR" id="Q9Z999"/>
<dbReference type="STRING" id="406984.CPK_ORF00591"/>
<dbReference type="GeneID" id="45050127"/>
<dbReference type="KEGG" id="cpa:CP_0693"/>
<dbReference type="KEGG" id="cpj:rpoC"/>
<dbReference type="KEGG" id="cpn:CPn_0082"/>
<dbReference type="KEGG" id="cpt:CpB0082"/>
<dbReference type="PATRIC" id="fig|115713.3.peg.94"/>
<dbReference type="eggNOG" id="COG0086">
    <property type="taxonomic scope" value="Bacteria"/>
</dbReference>
<dbReference type="HOGENOM" id="CLU_000524_3_1_0"/>
<dbReference type="OrthoDB" id="9815296at2"/>
<dbReference type="Proteomes" id="UP000000583">
    <property type="component" value="Chromosome"/>
</dbReference>
<dbReference type="Proteomes" id="UP000000801">
    <property type="component" value="Chromosome"/>
</dbReference>
<dbReference type="GO" id="GO:0000428">
    <property type="term" value="C:DNA-directed RNA polymerase complex"/>
    <property type="evidence" value="ECO:0007669"/>
    <property type="project" value="UniProtKB-KW"/>
</dbReference>
<dbReference type="GO" id="GO:0003677">
    <property type="term" value="F:DNA binding"/>
    <property type="evidence" value="ECO:0007669"/>
    <property type="project" value="UniProtKB-UniRule"/>
</dbReference>
<dbReference type="GO" id="GO:0003899">
    <property type="term" value="F:DNA-directed RNA polymerase activity"/>
    <property type="evidence" value="ECO:0007669"/>
    <property type="project" value="UniProtKB-UniRule"/>
</dbReference>
<dbReference type="GO" id="GO:0000287">
    <property type="term" value="F:magnesium ion binding"/>
    <property type="evidence" value="ECO:0007669"/>
    <property type="project" value="UniProtKB-UniRule"/>
</dbReference>
<dbReference type="GO" id="GO:0008270">
    <property type="term" value="F:zinc ion binding"/>
    <property type="evidence" value="ECO:0007669"/>
    <property type="project" value="UniProtKB-UniRule"/>
</dbReference>
<dbReference type="GO" id="GO:0006351">
    <property type="term" value="P:DNA-templated transcription"/>
    <property type="evidence" value="ECO:0007669"/>
    <property type="project" value="UniProtKB-UniRule"/>
</dbReference>
<dbReference type="CDD" id="cd02655">
    <property type="entry name" value="RNAP_beta'_C"/>
    <property type="match status" value="1"/>
</dbReference>
<dbReference type="CDD" id="cd01609">
    <property type="entry name" value="RNAP_beta'_N"/>
    <property type="match status" value="1"/>
</dbReference>
<dbReference type="Gene3D" id="1.10.132.30">
    <property type="match status" value="1"/>
</dbReference>
<dbReference type="Gene3D" id="1.10.150.390">
    <property type="match status" value="1"/>
</dbReference>
<dbReference type="Gene3D" id="1.10.1790.20">
    <property type="match status" value="1"/>
</dbReference>
<dbReference type="Gene3D" id="1.10.40.90">
    <property type="match status" value="1"/>
</dbReference>
<dbReference type="Gene3D" id="2.40.40.20">
    <property type="match status" value="1"/>
</dbReference>
<dbReference type="Gene3D" id="2.40.50.100">
    <property type="match status" value="3"/>
</dbReference>
<dbReference type="Gene3D" id="4.10.860.120">
    <property type="entry name" value="RNA polymerase II, clamp domain"/>
    <property type="match status" value="1"/>
</dbReference>
<dbReference type="Gene3D" id="1.10.274.100">
    <property type="entry name" value="RNA polymerase Rpb1, domain 3"/>
    <property type="match status" value="2"/>
</dbReference>
<dbReference type="HAMAP" id="MF_01322">
    <property type="entry name" value="RNApol_bact_RpoC"/>
    <property type="match status" value="1"/>
</dbReference>
<dbReference type="InterPro" id="IPR045867">
    <property type="entry name" value="DNA-dir_RpoC_beta_prime"/>
</dbReference>
<dbReference type="InterPro" id="IPR012754">
    <property type="entry name" value="DNA-dir_RpoC_beta_prime_bact"/>
</dbReference>
<dbReference type="InterPro" id="IPR000722">
    <property type="entry name" value="RNA_pol_asu"/>
</dbReference>
<dbReference type="InterPro" id="IPR006592">
    <property type="entry name" value="RNA_pol_N"/>
</dbReference>
<dbReference type="InterPro" id="IPR007080">
    <property type="entry name" value="RNA_pol_Rpb1_1"/>
</dbReference>
<dbReference type="InterPro" id="IPR007066">
    <property type="entry name" value="RNA_pol_Rpb1_3"/>
</dbReference>
<dbReference type="InterPro" id="IPR042102">
    <property type="entry name" value="RNA_pol_Rpb1_3_sf"/>
</dbReference>
<dbReference type="InterPro" id="IPR007083">
    <property type="entry name" value="RNA_pol_Rpb1_4"/>
</dbReference>
<dbReference type="InterPro" id="IPR007081">
    <property type="entry name" value="RNA_pol_Rpb1_5"/>
</dbReference>
<dbReference type="InterPro" id="IPR044893">
    <property type="entry name" value="RNA_pol_Rpb1_clamp_domain"/>
</dbReference>
<dbReference type="InterPro" id="IPR038120">
    <property type="entry name" value="Rpb1_funnel_sf"/>
</dbReference>
<dbReference type="NCBIfam" id="TIGR02386">
    <property type="entry name" value="rpoC_TIGR"/>
    <property type="match status" value="1"/>
</dbReference>
<dbReference type="PANTHER" id="PTHR19376">
    <property type="entry name" value="DNA-DIRECTED RNA POLYMERASE"/>
    <property type="match status" value="1"/>
</dbReference>
<dbReference type="PANTHER" id="PTHR19376:SF54">
    <property type="entry name" value="DNA-DIRECTED RNA POLYMERASE SUBUNIT BETA"/>
    <property type="match status" value="1"/>
</dbReference>
<dbReference type="Pfam" id="PF04997">
    <property type="entry name" value="RNA_pol_Rpb1_1"/>
    <property type="match status" value="1"/>
</dbReference>
<dbReference type="Pfam" id="PF00623">
    <property type="entry name" value="RNA_pol_Rpb1_2"/>
    <property type="match status" value="1"/>
</dbReference>
<dbReference type="Pfam" id="PF04983">
    <property type="entry name" value="RNA_pol_Rpb1_3"/>
    <property type="match status" value="1"/>
</dbReference>
<dbReference type="Pfam" id="PF05000">
    <property type="entry name" value="RNA_pol_Rpb1_4"/>
    <property type="match status" value="1"/>
</dbReference>
<dbReference type="Pfam" id="PF04998">
    <property type="entry name" value="RNA_pol_Rpb1_5"/>
    <property type="match status" value="1"/>
</dbReference>
<dbReference type="SMART" id="SM00663">
    <property type="entry name" value="RPOLA_N"/>
    <property type="match status" value="1"/>
</dbReference>
<dbReference type="SUPFAM" id="SSF64484">
    <property type="entry name" value="beta and beta-prime subunits of DNA dependent RNA-polymerase"/>
    <property type="match status" value="1"/>
</dbReference>
<sequence>MFGENSRDIGVLSKEGLFDKLEIGIASDITIRDKWSCGEIKKPETINYRTFKPEKGGLFCEKIFGPTKDWECCCGKYKKIKHKGIVCDRCGVEVTLSKVRRERMAHIELAVPIVHIWFFKTTPSRIGNVLGMTASDLERVIYYEEYVVIDPGKTDLTKKQLLNDAQYREVVEKWGKDAFVAKMGGEAIYDLLKSEDLQSLLKDLKERLRKTKSQQARMKLAKRLKIIEGFVSSSNHPEWMVLKNIPVVPPDLRPLVPLDGGRFATSDLNDLYRRVINRNNRLKAILRLKTPEVIVRNEKRMLQEAVDALFDNGRHGHPVMGAGNRPLKSLSEMLKGKNGRFRQNLLGKRVDYSGRSVIIVGPELKFNQCGLPKEMALELFEPFIIKRLKDQGSVYTIRSAKKMIQRGAPEVWDVLEEIIKGHPVLLNRAPTLHRLGIQAFEPVLIEGKAIRIHPLVCAAFNADFDGDQMAVHVPLSVEAQLEAKVLMMAPDNIFLPSSGKPVAIPSKDMTLGLYYLMADPTYFPEEHGGKTKIFKDEIEVLRALNNGGFIDDVFGDRRDETGRGIHIHEKIKVRIDGQIIETTPGRVLFNRIVPKELGFQNYSMPSKRISELILQCYKKVGLEATVRFLDDLKDLGFIQATKAAISMGLKDVRIPDIKSHILKDAYDKVAIVKKQYDDGIITEGERHSKTISIWTEVSEQLSDALYVEISKQTRSKHNPLFLMIDSGARGNKSQLKQLGALRGLMAKPNGAIIESPITSNFREGLTVLEYSISSHGARKGLADTALKTADSGYLTRRLVDVAQDVIITEKDCGTLNHIEISAIGQGSEELLPLKDRIYGRTVAEDVYQPGDKSRLLAQSGDVLNSVQAEAIDDAGIETIKIRSTLTCESPRGVCAKCYGLNLANGRLIGMGEAVGIIAAQSIGEPGTQLTMRTFHLGGIAATSSTPEIITNSDGILVYMDLRVVLGQEGHNLVLNKKGALHVVGDEGRTLNEYKKLLSTKSIESLEVFPVELGVKILVADGTPVSQGQRIAEVELHNIPIICDKPGFIKYEDLVEGISTEKVVNKNTGLVELIVKQHRGELHPQIAIYDDADLSELVGTYAIPSGAIISVEEGQRVDPGMLLARLPRGAIKTKDITGGLPRVAELVEARKPEDAADIAKIDGVVDFKGIQKNKRILVVCDEMTGMEEEHLIPLTKHLIVQRGDSVIKGQQLTDGLVVPHEILEICGVRELQKYLVNEVQEVYRLQGVDINDKHIEIIVRQMLQKVRITDPGDTTLLFGEDVNKKEFYEENRRTEEDGGKPAQAVPVLLGITKASLGTESFISAASFQDTTRVLTDAACCSKTDYLLGFKENVIMGHMIPGGTGFETHKRIKQYLEKEQEDLVFDFVSETECVC</sequence>
<organism>
    <name type="scientific">Chlamydia pneumoniae</name>
    <name type="common">Chlamydophila pneumoniae</name>
    <dbReference type="NCBI Taxonomy" id="83558"/>
    <lineage>
        <taxon>Bacteria</taxon>
        <taxon>Pseudomonadati</taxon>
        <taxon>Chlamydiota</taxon>
        <taxon>Chlamydiia</taxon>
        <taxon>Chlamydiales</taxon>
        <taxon>Chlamydiaceae</taxon>
        <taxon>Chlamydia/Chlamydophila group</taxon>
        <taxon>Chlamydia</taxon>
    </lineage>
</organism>
<name>RPOC_CHLPN</name>